<dbReference type="EMBL" id="DQ090914">
    <property type="protein sequence ID" value="AAZ42386.1"/>
    <property type="molecule type" value="Genomic_DNA"/>
</dbReference>
<dbReference type="RefSeq" id="NP_001035511.1">
    <property type="nucleotide sequence ID" value="NM_001040421.1"/>
</dbReference>
<dbReference type="SMR" id="Q2LL16"/>
<dbReference type="FunCoup" id="Q2LL16">
    <property type="interactions" value="57"/>
</dbReference>
<dbReference type="STRING" id="9544.ENSMMUP00000073112"/>
<dbReference type="Ensembl" id="ENSMMUT00000090085.1">
    <property type="protein sequence ID" value="ENSMMUP00000073112.1"/>
    <property type="gene ID" value="ENSMMUG00000060779.1"/>
</dbReference>
<dbReference type="GeneID" id="692077"/>
<dbReference type="KEGG" id="mcc:692077"/>
<dbReference type="CTD" id="117195"/>
<dbReference type="VEuPathDB" id="HostDB:ENSMMUG00000060779"/>
<dbReference type="GeneTree" id="ENSGT01030000234639"/>
<dbReference type="InParanoid" id="Q2LL16"/>
<dbReference type="OMA" id="DSVWCET"/>
<dbReference type="OrthoDB" id="9535517at2759"/>
<dbReference type="Proteomes" id="UP000006718">
    <property type="component" value="Chromosome 14"/>
</dbReference>
<dbReference type="Bgee" id="ENSMMUG00000060779">
    <property type="expression patterns" value="Expressed in liver and 1 other cell type or tissue"/>
</dbReference>
<dbReference type="GO" id="GO:0005886">
    <property type="term" value="C:plasma membrane"/>
    <property type="evidence" value="ECO:0000318"/>
    <property type="project" value="GO_Central"/>
</dbReference>
<dbReference type="GO" id="GO:0004930">
    <property type="term" value="F:G protein-coupled receptor activity"/>
    <property type="evidence" value="ECO:0000318"/>
    <property type="project" value="GO_Central"/>
</dbReference>
<dbReference type="GO" id="GO:0007186">
    <property type="term" value="P:G protein-coupled receptor signaling pathway"/>
    <property type="evidence" value="ECO:0000318"/>
    <property type="project" value="GO_Central"/>
</dbReference>
<dbReference type="CDD" id="cd15106">
    <property type="entry name" value="7tmA_MrgprX-like"/>
    <property type="match status" value="1"/>
</dbReference>
<dbReference type="FunFam" id="1.20.1070.10:FF:000140">
    <property type="entry name" value="Mas-related G-protein coupled receptor member X2"/>
    <property type="match status" value="1"/>
</dbReference>
<dbReference type="Gene3D" id="1.20.1070.10">
    <property type="entry name" value="Rhodopsin 7-helix transmembrane proteins"/>
    <property type="match status" value="1"/>
</dbReference>
<dbReference type="InterPro" id="IPR000276">
    <property type="entry name" value="GPCR_Rhodpsn"/>
</dbReference>
<dbReference type="InterPro" id="IPR017452">
    <property type="entry name" value="GPCR_Rhodpsn_7TM"/>
</dbReference>
<dbReference type="InterPro" id="IPR026234">
    <property type="entry name" value="MRGPCRFAMILY"/>
</dbReference>
<dbReference type="PANTHER" id="PTHR11334">
    <property type="entry name" value="MAS-RELATED G-PROTEIN COUPLED RECEPTOR"/>
    <property type="match status" value="1"/>
</dbReference>
<dbReference type="PANTHER" id="PTHR11334:SF34">
    <property type="entry name" value="MAS-RELATED G-PROTEIN COUPLED RECEPTOR MEMBER X3"/>
    <property type="match status" value="1"/>
</dbReference>
<dbReference type="Pfam" id="PF00001">
    <property type="entry name" value="7tm_1"/>
    <property type="match status" value="1"/>
</dbReference>
<dbReference type="PRINTS" id="PR00237">
    <property type="entry name" value="GPCRRHODOPSN"/>
</dbReference>
<dbReference type="PRINTS" id="PR02108">
    <property type="entry name" value="MRGPCRFAMILY"/>
</dbReference>
<dbReference type="SUPFAM" id="SSF81321">
    <property type="entry name" value="Family A G protein-coupled receptor-like"/>
    <property type="match status" value="1"/>
</dbReference>
<dbReference type="PROSITE" id="PS00237">
    <property type="entry name" value="G_PROTEIN_RECEP_F1_1"/>
    <property type="match status" value="1"/>
</dbReference>
<dbReference type="PROSITE" id="PS50262">
    <property type="entry name" value="G_PROTEIN_RECEP_F1_2"/>
    <property type="match status" value="1"/>
</dbReference>
<keyword id="KW-1003">Cell membrane</keyword>
<keyword id="KW-0297">G-protein coupled receptor</keyword>
<keyword id="KW-0472">Membrane</keyword>
<keyword id="KW-0675">Receptor</keyword>
<keyword id="KW-1185">Reference proteome</keyword>
<keyword id="KW-0807">Transducer</keyword>
<keyword id="KW-0812">Transmembrane</keyword>
<keyword id="KW-1133">Transmembrane helix</keyword>
<proteinExistence type="inferred from homology"/>
<name>MRGX3_MACMU</name>
<protein>
    <recommendedName>
        <fullName>Mas-related G-protein coupled receptor member X3</fullName>
    </recommendedName>
</protein>
<feature type="chain" id="PRO_0000252143" description="Mas-related G-protein coupled receptor member X3">
    <location>
        <begin position="1"/>
        <end position="322"/>
    </location>
</feature>
<feature type="topological domain" description="Extracellular" evidence="2">
    <location>
        <begin position="1"/>
        <end position="31"/>
    </location>
</feature>
<feature type="transmembrane region" description="Helical; Name=1" evidence="2">
    <location>
        <begin position="32"/>
        <end position="52"/>
    </location>
</feature>
<feature type="topological domain" description="Cytoplasmic" evidence="2">
    <location>
        <begin position="53"/>
        <end position="60"/>
    </location>
</feature>
<feature type="transmembrane region" description="Helical; Name=2" evidence="2">
    <location>
        <begin position="61"/>
        <end position="81"/>
    </location>
</feature>
<feature type="topological domain" description="Extracellular" evidence="2">
    <location>
        <begin position="82"/>
        <end position="96"/>
    </location>
</feature>
<feature type="transmembrane region" description="Helical; Name=3" evidence="2">
    <location>
        <begin position="97"/>
        <end position="117"/>
    </location>
</feature>
<feature type="topological domain" description="Cytoplasmic" evidence="2">
    <location>
        <begin position="118"/>
        <end position="139"/>
    </location>
</feature>
<feature type="transmembrane region" description="Helical; Name=4" evidence="2">
    <location>
        <begin position="140"/>
        <end position="160"/>
    </location>
</feature>
<feature type="topological domain" description="Extracellular" evidence="2">
    <location>
        <begin position="161"/>
        <end position="177"/>
    </location>
</feature>
<feature type="transmembrane region" description="Helical; Name=5" evidence="2">
    <location>
        <begin position="178"/>
        <end position="198"/>
    </location>
</feature>
<feature type="topological domain" description="Cytoplasmic" evidence="2">
    <location>
        <begin position="199"/>
        <end position="213"/>
    </location>
</feature>
<feature type="transmembrane region" description="Helical; Name=6" evidence="2">
    <location>
        <begin position="214"/>
        <end position="234"/>
    </location>
</feature>
<feature type="topological domain" description="Extracellular" evidence="2">
    <location>
        <begin position="235"/>
        <end position="254"/>
    </location>
</feature>
<feature type="transmembrane region" description="Helical; Name=7" evidence="2">
    <location>
        <begin position="255"/>
        <end position="275"/>
    </location>
</feature>
<feature type="topological domain" description="Cytoplasmic" evidence="2">
    <location>
        <begin position="276"/>
        <end position="322"/>
    </location>
</feature>
<gene>
    <name type="primary">MRGPRX3</name>
</gene>
<sequence>MDPTIPALGTSQTPINRREETPCYKQTLSLTVLTCIISLVGLTGNAVVLWLLGFRMRRNAVSTYILNLAAVDFLFLSGHIVRSPLRLISIRHPISKIVNPVMTFPYFIGLSMLSAISTERCLSVLWPMWYRCRRPRHLSVVVCVLLWALSLLRSILEWMFCDFLFSGADSVWCETSDFITIAWLIFLCVVLCGSSLVLLVRILCGSRKMPLTRLYVTILLTVLVFLLCGLPFGIQWALFSRIHLDWKVLFCHVHLISVFLSSLNSSANPIIYFFVGSFRQRQNRQNLKLVLQRALQDTPEVDEGGGRLPEETLELSVSRLEQ</sequence>
<comment type="function">
    <text evidence="1">Orphan receptor. Probably involved in the function of nociceptive neurons. May regulate nociceptor function and/or development, including the sensation or modulation of pain. Potently activated by enkephalins (By similarity).</text>
</comment>
<comment type="subcellular location">
    <subcellularLocation>
        <location>Cell membrane</location>
        <topology>Multi-pass membrane protein</topology>
    </subcellularLocation>
</comment>
<comment type="similarity">
    <text evidence="3">Belongs to the G-protein coupled receptor 1 family. Mas subfamily.</text>
</comment>
<organism>
    <name type="scientific">Macaca mulatta</name>
    <name type="common">Rhesus macaque</name>
    <dbReference type="NCBI Taxonomy" id="9544"/>
    <lineage>
        <taxon>Eukaryota</taxon>
        <taxon>Metazoa</taxon>
        <taxon>Chordata</taxon>
        <taxon>Craniata</taxon>
        <taxon>Vertebrata</taxon>
        <taxon>Euteleostomi</taxon>
        <taxon>Mammalia</taxon>
        <taxon>Eutheria</taxon>
        <taxon>Euarchontoglires</taxon>
        <taxon>Primates</taxon>
        <taxon>Haplorrhini</taxon>
        <taxon>Catarrhini</taxon>
        <taxon>Cercopithecidae</taxon>
        <taxon>Cercopithecinae</taxon>
        <taxon>Macaca</taxon>
    </lineage>
</organism>
<accession>Q2LL16</accession>
<evidence type="ECO:0000250" key="1"/>
<evidence type="ECO:0000255" key="2"/>
<evidence type="ECO:0000255" key="3">
    <source>
        <dbReference type="PROSITE-ProRule" id="PRU00521"/>
    </source>
</evidence>
<reference key="1">
    <citation type="journal article" date="2006" name="Br. J. Pharmacol.">
        <title>Characterization of the Mas-related gene family: structural and functional conservation of human and rhesus MrgX receptors.</title>
        <authorList>
            <person name="Burstein E.S."/>
            <person name="Ott T.R."/>
            <person name="Feddock M."/>
            <person name="Ma J.-N."/>
            <person name="Fuhs S."/>
            <person name="Wong S."/>
            <person name="Schiffer H.H."/>
            <person name="Brann M.R."/>
            <person name="Nash N.R."/>
        </authorList>
    </citation>
    <scope>NUCLEOTIDE SEQUENCE [GENOMIC DNA]</scope>
    <source>
        <tissue>Blood</tissue>
    </source>
</reference>